<name>ZBT38_RAT</name>
<accession>Q5EXX3</accession>
<proteinExistence type="evidence at transcript level"/>
<reference evidence="8 9" key="1">
    <citation type="journal article" date="2005" name="Mol. Cell. Biol.">
        <title>ZENON, a novel POZ Kruppel-like DNA binding protein associated with differentiation and/or survival of late postmitotic neurons.</title>
        <authorList>
            <person name="Kiefer H."/>
            <person name="Chatail-Hermitte F."/>
            <person name="Ravassard P."/>
            <person name="Bayard E."/>
            <person name="Brunet I."/>
            <person name="Mallet J."/>
        </authorList>
    </citation>
    <scope>NUCLEOTIDE SEQUENCE [MRNA]</scope>
    <scope>FUNCTION</scope>
    <scope>SUBCELLULAR LOCATION</scope>
    <scope>TISSUE SPECIFICITY</scope>
    <scope>DEVELOPMENTAL STAGE</scope>
    <source>
        <strain evidence="9">Sprague-Dawley</strain>
        <tissue evidence="9">Brain</tissue>
    </source>
</reference>
<evidence type="ECO:0000250" key="1">
    <source>
        <dbReference type="UniProtKB" id="Q8BW71"/>
    </source>
</evidence>
<evidence type="ECO:0000250" key="2">
    <source>
        <dbReference type="UniProtKB" id="Q8NAP3"/>
    </source>
</evidence>
<evidence type="ECO:0000255" key="3">
    <source>
        <dbReference type="PROSITE-ProRule" id="PRU00037"/>
    </source>
</evidence>
<evidence type="ECO:0000255" key="4">
    <source>
        <dbReference type="PROSITE-ProRule" id="PRU00042"/>
    </source>
</evidence>
<evidence type="ECO:0000256" key="5">
    <source>
        <dbReference type="SAM" id="MobiDB-lite"/>
    </source>
</evidence>
<evidence type="ECO:0000269" key="6">
    <source>
    </source>
</evidence>
<evidence type="ECO:0000303" key="7">
    <source>
    </source>
</evidence>
<evidence type="ECO:0000305" key="8"/>
<evidence type="ECO:0000312" key="9">
    <source>
        <dbReference type="EMBL" id="AAT72920.1"/>
    </source>
</evidence>
<feature type="chain" id="PRO_0000047743" description="Zinc finger and BTB domain-containing protein 38">
    <location>
        <begin position="1"/>
        <end position="1203"/>
    </location>
</feature>
<feature type="domain" description="BTB" evidence="3">
    <location>
        <begin position="33"/>
        <end position="100"/>
    </location>
</feature>
<feature type="zinc finger region" description="C2H2-type 1" evidence="4">
    <location>
        <begin position="341"/>
        <end position="363"/>
    </location>
</feature>
<feature type="zinc finger region" description="C2H2-type 2; degenerate" evidence="4">
    <location>
        <begin position="370"/>
        <end position="394"/>
    </location>
</feature>
<feature type="zinc finger region" description="C2H2-type 3" evidence="4">
    <location>
        <begin position="459"/>
        <end position="481"/>
    </location>
</feature>
<feature type="zinc finger region" description="C2H2-type 4" evidence="4">
    <location>
        <begin position="487"/>
        <end position="509"/>
    </location>
</feature>
<feature type="zinc finger region" description="C2H2-type 5" evidence="4">
    <location>
        <begin position="515"/>
        <end position="538"/>
    </location>
</feature>
<feature type="zinc finger region" description="C2H2-type 6" evidence="4">
    <location>
        <begin position="1017"/>
        <end position="1039"/>
    </location>
</feature>
<feature type="zinc finger region" description="C2H2-type 7" evidence="4">
    <location>
        <begin position="1045"/>
        <end position="1067"/>
    </location>
</feature>
<feature type="zinc finger region" description="C2H2-type 8" evidence="4">
    <location>
        <begin position="1073"/>
        <end position="1095"/>
    </location>
</feature>
<feature type="zinc finger region" description="C2H2-type 9" evidence="4">
    <location>
        <begin position="1101"/>
        <end position="1123"/>
    </location>
</feature>
<feature type="zinc finger region" description="C2H2-type 10" evidence="4">
    <location>
        <begin position="1132"/>
        <end position="1154"/>
    </location>
</feature>
<feature type="region of interest" description="Disordered" evidence="5">
    <location>
        <begin position="230"/>
        <end position="334"/>
    </location>
</feature>
<feature type="region of interest" description="Interaction with CBFA2T3" evidence="2">
    <location>
        <begin position="299"/>
        <end position="522"/>
    </location>
</feature>
<feature type="region of interest" description="Disordered" evidence="5">
    <location>
        <begin position="581"/>
        <end position="644"/>
    </location>
</feature>
<feature type="region of interest" description="Disordered" evidence="5">
    <location>
        <begin position="731"/>
        <end position="776"/>
    </location>
</feature>
<feature type="region of interest" description="Disordered" evidence="5">
    <location>
        <begin position="857"/>
        <end position="882"/>
    </location>
</feature>
<feature type="region of interest" description="Disordered" evidence="5">
    <location>
        <begin position="895"/>
        <end position="914"/>
    </location>
</feature>
<feature type="region of interest" description="Disordered" evidence="5">
    <location>
        <begin position="1172"/>
        <end position="1203"/>
    </location>
</feature>
<feature type="compositionally biased region" description="Polar residues" evidence="5">
    <location>
        <begin position="269"/>
        <end position="280"/>
    </location>
</feature>
<feature type="compositionally biased region" description="Basic and acidic residues" evidence="5">
    <location>
        <begin position="313"/>
        <end position="322"/>
    </location>
</feature>
<feature type="compositionally biased region" description="Polar residues" evidence="5">
    <location>
        <begin position="581"/>
        <end position="598"/>
    </location>
</feature>
<feature type="compositionally biased region" description="Polar residues" evidence="5">
    <location>
        <begin position="607"/>
        <end position="628"/>
    </location>
</feature>
<feature type="compositionally biased region" description="Polar residues" evidence="5">
    <location>
        <begin position="635"/>
        <end position="644"/>
    </location>
</feature>
<feature type="compositionally biased region" description="Polar residues" evidence="5">
    <location>
        <begin position="731"/>
        <end position="741"/>
    </location>
</feature>
<feature type="compositionally biased region" description="Basic and acidic residues" evidence="5">
    <location>
        <begin position="747"/>
        <end position="757"/>
    </location>
</feature>
<feature type="compositionally biased region" description="Basic and acidic residues" evidence="5">
    <location>
        <begin position="866"/>
        <end position="877"/>
    </location>
</feature>
<feature type="modified residue" description="Phosphoserine" evidence="2">
    <location>
        <position position="130"/>
    </location>
</feature>
<feature type="cross-link" description="Glycyl lysine isopeptide (Lys-Gly) (interchain with G-Cter in SUMO2)" evidence="2">
    <location>
        <position position="43"/>
    </location>
</feature>
<feature type="cross-link" description="Glycyl lysine isopeptide (Lys-Gly) (interchain with G-Cter in SUMO2)" evidence="2">
    <location>
        <position position="145"/>
    </location>
</feature>
<feature type="cross-link" description="Glycyl lysine isopeptide (Lys-Gly) (interchain with G-Cter in SUMO2)" evidence="2">
    <location>
        <position position="148"/>
    </location>
</feature>
<feature type="cross-link" description="Glycyl lysine isopeptide (Lys-Gly) (interchain with G-Cter in SUMO2)" evidence="2">
    <location>
        <position position="151"/>
    </location>
</feature>
<feature type="cross-link" description="Glycyl lysine isopeptide (Lys-Gly) (interchain with G-Cter in SUMO2)" evidence="2">
    <location>
        <position position="260"/>
    </location>
</feature>
<feature type="cross-link" description="Glycyl lysine isopeptide (Lys-Gly) (interchain with G-Cter in SUMO2)" evidence="2">
    <location>
        <position position="549"/>
    </location>
</feature>
<feature type="cross-link" description="Glycyl lysine isopeptide (Lys-Gly) (interchain with G-Cter in SUMO2)" evidence="2">
    <location>
        <position position="556"/>
    </location>
</feature>
<feature type="cross-link" description="Glycyl lysine isopeptide (Lys-Gly) (interchain with G-Cter in SUMO2)" evidence="2">
    <location>
        <position position="750"/>
    </location>
</feature>
<feature type="cross-link" description="Glycyl lysine isopeptide (Lys-Gly) (interchain with G-Cter in SUMO2)" evidence="2">
    <location>
        <position position="755"/>
    </location>
</feature>
<feature type="cross-link" description="Glycyl lysine isopeptide (Lys-Gly) (interchain with G-Cter in SUMO2)" evidence="2">
    <location>
        <position position="796"/>
    </location>
</feature>
<feature type="cross-link" description="Glycyl lysine isopeptide (Lys-Gly) (interchain with G-Cter in SUMO2)" evidence="2">
    <location>
        <position position="806"/>
    </location>
</feature>
<feature type="cross-link" description="Glycyl lysine isopeptide (Lys-Gly) (interchain with G-Cter in SUMO2)" evidence="2">
    <location>
        <position position="813"/>
    </location>
</feature>
<feature type="cross-link" description="Glycyl lysine isopeptide (Lys-Gly) (interchain with G-Cter in SUMO2)" evidence="2">
    <location>
        <position position="834"/>
    </location>
</feature>
<feature type="cross-link" description="Glycyl lysine isopeptide (Lys-Gly) (interchain with G-Cter in SUMO2)" evidence="2">
    <location>
        <position position="842"/>
    </location>
</feature>
<feature type="cross-link" description="Glycyl lysine isopeptide (Lys-Gly) (interchain with G-Cter in SUMO2)" evidence="2">
    <location>
        <position position="849"/>
    </location>
</feature>
<feature type="cross-link" description="Glycyl lysine isopeptide (Lys-Gly) (interchain with G-Cter in SUMO2)" evidence="2">
    <location>
        <position position="915"/>
    </location>
</feature>
<feature type="cross-link" description="Glycyl lysine isopeptide (Lys-Gly) (interchain with G-Cter in SUMO2)" evidence="2">
    <location>
        <position position="971"/>
    </location>
</feature>
<feature type="cross-link" description="Glycyl lysine isopeptide (Lys-Gly) (interchain with G-Cter in SUMO2)" evidence="2">
    <location>
        <position position="976"/>
    </location>
</feature>
<feature type="cross-link" description="Glycyl lysine isopeptide (Lys-Gly) (interchain with G-Cter in SUMO2)" evidence="2">
    <location>
        <position position="984"/>
    </location>
</feature>
<feature type="cross-link" description="Glycyl lysine isopeptide (Lys-Gly) (interchain with G-Cter in SUMO2)" evidence="2">
    <location>
        <position position="988"/>
    </location>
</feature>
<feature type="cross-link" description="Glycyl lysine isopeptide (Lys-Gly) (interchain with G-Cter in SUMO2)" evidence="2">
    <location>
        <position position="998"/>
    </location>
</feature>
<feature type="cross-link" description="Glycyl lysine isopeptide (Lys-Gly) (interchain with G-Cter in SUMO2)" evidence="2">
    <location>
        <position position="1024"/>
    </location>
</feature>
<feature type="cross-link" description="Glycyl lysine isopeptide (Lys-Gly) (interchain with G-Cter in SUMO2)" evidence="2">
    <location>
        <position position="1033"/>
    </location>
</feature>
<feature type="cross-link" description="Glycyl lysine isopeptide (Lys-Gly) (interchain with G-Cter in SUMO2)" evidence="2">
    <location>
        <position position="1116"/>
    </location>
</feature>
<feature type="cross-link" description="Glycyl lysine isopeptide (Lys-Gly) (interchain with G-Cter in SUMO2)" evidence="2">
    <location>
        <position position="1139"/>
    </location>
</feature>
<feature type="cross-link" description="Glycyl lysine isopeptide (Lys-Gly) (interchain with G-Cter in SUMO2)" evidence="2">
    <location>
        <position position="1142"/>
    </location>
</feature>
<feature type="cross-link" description="Glycyl lysine isopeptide (Lys-Gly) (interchain with G-Cter in SUMO2)" evidence="2">
    <location>
        <position position="1157"/>
    </location>
</feature>
<feature type="cross-link" description="Glycyl lysine isopeptide (Lys-Gly) (interchain with G-Cter in SUMO2)" evidence="2">
    <location>
        <position position="1190"/>
    </location>
</feature>
<sequence>MTVMSLSRDLKDDFHSDTVLSILNEQRIRGILCDVTIIVEDTKFKAHSNVLAASSLYFKNIFWSHTICISSHVLELDDLKAEVFTEILNYIYSSTVVVRRQETVTDLAAAGKRLGISFLEDLSDRNFSNSPGPYVVCITEKGVVKEEKNEKRHEEPAVTNGPRITNAFSIIETENSNSMFSPLDLRASFKKVSDAMRTTSLCQERASVCPEAEPVRTLAEHSYAVSSITEAYRSQPLREHDSSSSSGKTGKENGEALTTKAKPCRKPKTQTQDSDSTTENMPLPLVTCPEVNQERSPQPAPILSHSEPPSSEGDVHFPREDENQPSETPGPPAAEVPPLVYNCSCCSKSFDSSTLLGAHMQLHKPTQDPFVCKYCNKQFTTLNRLDRHEQICMRSSHMPMPGGNQPFLENYPTIGQDGGSFTSPDSLVPESRIGELSSAGSALSDADHMVKFVNGQMLYSCVVCKRSYVTLSSLRRHANVHSWRRTYPCHYCNKVFALAEYRTRHEIWHTGERRYQCIFCLETFMTYYILKNHQKSFHAIDHRLSISKKTANGGLKPTVYPYKLYRLLPMRCKRAPYKSYRNSSYESAQGNRQRNESPPDTFVIPNLPSSEMPTLNFQDGRNSLTSSPAIPVETPSWQGTPTSAKVKNAEGLKWRKQALKTDLVDSAEVSISSIGNSVSTTLQAEPVCVSSGEHSASVISYSGLVPSVIVHSSQFSSVIKHSNAIACLANSNHQSPSQPVASPSLIKDSKPEADKASKLASRPKNSKEKKKTVPCNRGEITEEAKYVADLGGSSGKTTNVVEETSKIETYIAKPALPGTSTNSNVAPLCQITVKIGNEAIVKRHILGSKLFYKRGRKPKYQMQEETLPRESDPETRGDSPLGLCQADCVEMSEAFDEVSDQDSTDKPWRPYYNYKPKKKSKQLRKIRKVKWRKERGSRSPVGRRRYPAELDRAEMGRRRYPAELDRCAEVKLPPDKASEEEENKEMPKLQCELCDGDKAAGAGAEGKPHQHLTLKPYICELCAKQFQSSSTLKMHMRCHTGEKPYQCKTCGRRFSVQGNLQKHERIHLGVKEFICQYCNKAFTLNETLKIHERIHTGEKRYHCQFCFQGFLYLSTKRNHERRHVREHDGKGFACFQCPKICKTAAALRMHQKKHLFKTLTKQEETDDLCHENSDLLESQPCTDSEDSDQKDDIKKPLLKMSFE</sequence>
<protein>
    <recommendedName>
        <fullName>Zinc finger and BTB domain-containing protein 38</fullName>
    </recommendedName>
    <alternativeName>
        <fullName>Zinc finger protein expressed in neurons</fullName>
        <shortName>Zenon</shortName>
    </alternativeName>
</protein>
<organism>
    <name type="scientific">Rattus norvegicus</name>
    <name type="common">Rat</name>
    <dbReference type="NCBI Taxonomy" id="10116"/>
    <lineage>
        <taxon>Eukaryota</taxon>
        <taxon>Metazoa</taxon>
        <taxon>Chordata</taxon>
        <taxon>Craniata</taxon>
        <taxon>Vertebrata</taxon>
        <taxon>Euteleostomi</taxon>
        <taxon>Mammalia</taxon>
        <taxon>Eutheria</taxon>
        <taxon>Euarchontoglires</taxon>
        <taxon>Glires</taxon>
        <taxon>Rodentia</taxon>
        <taxon>Myomorpha</taxon>
        <taxon>Muroidea</taxon>
        <taxon>Muridae</taxon>
        <taxon>Murinae</taxon>
        <taxon>Rattus</taxon>
    </lineage>
</organism>
<keyword id="KW-0010">Activator</keyword>
<keyword id="KW-0158">Chromosome</keyword>
<keyword id="KW-0238">DNA-binding</keyword>
<keyword id="KW-1017">Isopeptide bond</keyword>
<keyword id="KW-0479">Metal-binding</keyword>
<keyword id="KW-0539">Nucleus</keyword>
<keyword id="KW-0597">Phosphoprotein</keyword>
<keyword id="KW-1185">Reference proteome</keyword>
<keyword id="KW-0677">Repeat</keyword>
<keyword id="KW-0678">Repressor</keyword>
<keyword id="KW-0804">Transcription</keyword>
<keyword id="KW-0805">Transcription regulation</keyword>
<keyword id="KW-0832">Ubl conjugation</keyword>
<keyword id="KW-0862">Zinc</keyword>
<keyword id="KW-0863">Zinc-finger</keyword>
<gene>
    <name evidence="1" type="primary">Zbtb38</name>
</gene>
<comment type="function">
    <text evidence="2 6 7">Transcriptional regulator with bimodal DNA-binding specificity. Binds with a higher affinity to methylated CpG dinucleotides in the consensus sequence 5'-CGCG-3' but can also bind to E-box elements (5'-CACGTG-3'). Can also bind specifically to a single methyl-CpG pair. Represses transcription in a methyl-CpG-dependent manner. Plays an important role in regulating DNA-replication and common fragile sites (CFS) stability in a RBBP6- and MCM10-dependent manner; represses expression of MCM10 which plays an important role in DNA-replication (By similarity). Acts as a transcriptional activator. May be involved in the differentiation and/or survival of late postmitotic neurons (PubMed:15713629).</text>
</comment>
<comment type="subunit">
    <text evidence="2">Interacts with CBFA2T3, ZBTB4 and RBBP6.</text>
</comment>
<comment type="subcellular location">
    <subcellularLocation>
        <location evidence="6">Nucleus</location>
    </subcellularLocation>
    <subcellularLocation>
        <location evidence="2">Chromosome</location>
    </subcellularLocation>
    <text evidence="2">Localizes to chromocenters.</text>
</comment>
<comment type="tissue specificity">
    <text evidence="6">Widely expressed throughout the adult brain where it is found mainly in neurons. Also expressed in the adrenal medulla. Not detected in non-neural tissues including heart, spleen, liver and muscle. In the embryo, expressed in the developing brain and spinal cord but not in the migratory neural crest. Also expressed in the limbs, transiently in somites, and in the embryonic liver. In the embryonic neural tube, expression is restricted to late postmitotic neurons.</text>
</comment>
<comment type="developmental stage">
    <text evidence="6">Expressed in embryo and adult. Embryonic expression is detected from 12 dpc.</text>
</comment>
<comment type="domain">
    <text evidence="6">The BTB domain is not required for activation of transcription or self-association.</text>
</comment>
<comment type="PTM">
    <text evidence="2">Ubiquitinated by RBBP6; leading to its degradation by the proteasome.</text>
</comment>
<dbReference type="EMBL" id="AY623002">
    <property type="protein sequence ID" value="AAT72920.1"/>
    <property type="molecule type" value="mRNA"/>
</dbReference>
<dbReference type="RefSeq" id="NP_001012489.1">
    <property type="nucleotide sequence ID" value="NM_001012471.1"/>
</dbReference>
<dbReference type="SMR" id="Q5EXX3"/>
<dbReference type="BioGRID" id="261189">
    <property type="interactions" value="1"/>
</dbReference>
<dbReference type="FunCoup" id="Q5EXX3">
    <property type="interactions" value="482"/>
</dbReference>
<dbReference type="STRING" id="10116.ENSRNOP00000067350"/>
<dbReference type="PhosphoSitePlus" id="Q5EXX3"/>
<dbReference type="PaxDb" id="10116-ENSRNOP00000067350"/>
<dbReference type="GeneID" id="315936"/>
<dbReference type="KEGG" id="rno:315936"/>
<dbReference type="UCSC" id="RGD:1310136">
    <property type="organism name" value="rat"/>
</dbReference>
<dbReference type="AGR" id="RGD:1310136"/>
<dbReference type="CTD" id="253461"/>
<dbReference type="RGD" id="1310136">
    <property type="gene designation" value="Zbtb38"/>
</dbReference>
<dbReference type="eggNOG" id="KOG1721">
    <property type="taxonomic scope" value="Eukaryota"/>
</dbReference>
<dbReference type="InParanoid" id="Q5EXX3"/>
<dbReference type="PhylomeDB" id="Q5EXX3"/>
<dbReference type="PRO" id="PR:Q5EXX3"/>
<dbReference type="Proteomes" id="UP000002494">
    <property type="component" value="Unplaced"/>
</dbReference>
<dbReference type="GO" id="GO:0005694">
    <property type="term" value="C:chromosome"/>
    <property type="evidence" value="ECO:0007669"/>
    <property type="project" value="UniProtKB-SubCell"/>
</dbReference>
<dbReference type="GO" id="GO:0005634">
    <property type="term" value="C:nucleus"/>
    <property type="evidence" value="ECO:0000314"/>
    <property type="project" value="UniProtKB"/>
</dbReference>
<dbReference type="GO" id="GO:0003700">
    <property type="term" value="F:DNA-binding transcription factor activity"/>
    <property type="evidence" value="ECO:0000314"/>
    <property type="project" value="UniProtKB"/>
</dbReference>
<dbReference type="GO" id="GO:0000981">
    <property type="term" value="F:DNA-binding transcription factor activity, RNA polymerase II-specific"/>
    <property type="evidence" value="ECO:0000318"/>
    <property type="project" value="GO_Central"/>
</dbReference>
<dbReference type="GO" id="GO:0008327">
    <property type="term" value="F:methyl-CpG binding"/>
    <property type="evidence" value="ECO:0000266"/>
    <property type="project" value="RGD"/>
</dbReference>
<dbReference type="GO" id="GO:0042803">
    <property type="term" value="F:protein homodimerization activity"/>
    <property type="evidence" value="ECO:0000266"/>
    <property type="project" value="RGD"/>
</dbReference>
<dbReference type="GO" id="GO:0000978">
    <property type="term" value="F:RNA polymerase II cis-regulatory region sequence-specific DNA binding"/>
    <property type="evidence" value="ECO:0000318"/>
    <property type="project" value="GO_Central"/>
</dbReference>
<dbReference type="GO" id="GO:0008270">
    <property type="term" value="F:zinc ion binding"/>
    <property type="evidence" value="ECO:0007669"/>
    <property type="project" value="UniProtKB-KW"/>
</dbReference>
<dbReference type="GO" id="GO:0006974">
    <property type="term" value="P:DNA damage response"/>
    <property type="evidence" value="ECO:0000250"/>
    <property type="project" value="UniProtKB"/>
</dbReference>
<dbReference type="GO" id="GO:0045892">
    <property type="term" value="P:negative regulation of DNA-templated transcription"/>
    <property type="evidence" value="ECO:0000250"/>
    <property type="project" value="UniProtKB"/>
</dbReference>
<dbReference type="GO" id="GO:0045944">
    <property type="term" value="P:positive regulation of transcription by RNA polymerase II"/>
    <property type="evidence" value="ECO:0000314"/>
    <property type="project" value="UniProtKB"/>
</dbReference>
<dbReference type="GO" id="GO:0006275">
    <property type="term" value="P:regulation of DNA replication"/>
    <property type="evidence" value="ECO:0000250"/>
    <property type="project" value="UniProtKB"/>
</dbReference>
<dbReference type="GO" id="GO:0006355">
    <property type="term" value="P:regulation of DNA-templated transcription"/>
    <property type="evidence" value="ECO:0000318"/>
    <property type="project" value="GO_Central"/>
</dbReference>
<dbReference type="CDD" id="cd18223">
    <property type="entry name" value="BTB_POZ_ZBTB38_CIBZ"/>
    <property type="match status" value="1"/>
</dbReference>
<dbReference type="FunFam" id="3.30.160.60:FF:000235">
    <property type="entry name" value="Zinc finger and BTB domain containing 38"/>
    <property type="match status" value="1"/>
</dbReference>
<dbReference type="FunFam" id="3.30.160.60:FF:001209">
    <property type="entry name" value="Zinc finger and BTB domain-containing protein 38"/>
    <property type="match status" value="1"/>
</dbReference>
<dbReference type="FunFam" id="3.30.160.60:FF:000437">
    <property type="entry name" value="zinc finger and BTB domain-containing protein 38"/>
    <property type="match status" value="1"/>
</dbReference>
<dbReference type="FunFam" id="3.30.160.60:FF:001058">
    <property type="entry name" value="zinc finger and BTB domain-containing protein 38"/>
    <property type="match status" value="1"/>
</dbReference>
<dbReference type="FunFam" id="3.30.160.60:FF:001251">
    <property type="entry name" value="zinc finger and BTB domain-containing protein 38"/>
    <property type="match status" value="1"/>
</dbReference>
<dbReference type="FunFam" id="3.30.160.60:FF:001331">
    <property type="entry name" value="zinc finger and BTB domain-containing protein 38"/>
    <property type="match status" value="1"/>
</dbReference>
<dbReference type="FunFam" id="3.30.160.60:FF:001428">
    <property type="entry name" value="zinc finger and BTB domain-containing protein 38"/>
    <property type="match status" value="1"/>
</dbReference>
<dbReference type="FunFam" id="3.30.160.60:FF:001474">
    <property type="entry name" value="zinc finger and BTB domain-containing protein 38"/>
    <property type="match status" value="1"/>
</dbReference>
<dbReference type="FunFam" id="3.30.710.10:FF:000081">
    <property type="entry name" value="zinc finger and BTB domain-containing protein 38"/>
    <property type="match status" value="1"/>
</dbReference>
<dbReference type="Gene3D" id="3.30.160.60">
    <property type="entry name" value="Classic Zinc Finger"/>
    <property type="match status" value="8"/>
</dbReference>
<dbReference type="Gene3D" id="3.30.710.10">
    <property type="entry name" value="Potassium Channel Kv1.1, Chain A"/>
    <property type="match status" value="1"/>
</dbReference>
<dbReference type="InterPro" id="IPR000210">
    <property type="entry name" value="BTB/POZ_dom"/>
</dbReference>
<dbReference type="InterPro" id="IPR011333">
    <property type="entry name" value="SKP1/BTB/POZ_sf"/>
</dbReference>
<dbReference type="InterPro" id="IPR036236">
    <property type="entry name" value="Znf_C2H2_sf"/>
</dbReference>
<dbReference type="InterPro" id="IPR013087">
    <property type="entry name" value="Znf_C2H2_type"/>
</dbReference>
<dbReference type="PANTHER" id="PTHR24394:SF58">
    <property type="entry name" value="ZINC FINGER AND BTB DOMAIN CONTAINING 33"/>
    <property type="match status" value="1"/>
</dbReference>
<dbReference type="PANTHER" id="PTHR24394">
    <property type="entry name" value="ZINC FINGER PROTEIN"/>
    <property type="match status" value="1"/>
</dbReference>
<dbReference type="Pfam" id="PF00651">
    <property type="entry name" value="BTB"/>
    <property type="match status" value="1"/>
</dbReference>
<dbReference type="Pfam" id="PF00096">
    <property type="entry name" value="zf-C2H2"/>
    <property type="match status" value="3"/>
</dbReference>
<dbReference type="Pfam" id="PF13912">
    <property type="entry name" value="zf-C2H2_6"/>
    <property type="match status" value="3"/>
</dbReference>
<dbReference type="SMART" id="SM00225">
    <property type="entry name" value="BTB"/>
    <property type="match status" value="1"/>
</dbReference>
<dbReference type="SMART" id="SM00355">
    <property type="entry name" value="ZnF_C2H2"/>
    <property type="match status" value="10"/>
</dbReference>
<dbReference type="SUPFAM" id="SSF57667">
    <property type="entry name" value="beta-beta-alpha zinc fingers"/>
    <property type="match status" value="5"/>
</dbReference>
<dbReference type="SUPFAM" id="SSF54695">
    <property type="entry name" value="POZ domain"/>
    <property type="match status" value="1"/>
</dbReference>
<dbReference type="PROSITE" id="PS50097">
    <property type="entry name" value="BTB"/>
    <property type="match status" value="1"/>
</dbReference>
<dbReference type="PROSITE" id="PS00028">
    <property type="entry name" value="ZINC_FINGER_C2H2_1"/>
    <property type="match status" value="9"/>
</dbReference>
<dbReference type="PROSITE" id="PS50157">
    <property type="entry name" value="ZINC_FINGER_C2H2_2"/>
    <property type="match status" value="9"/>
</dbReference>